<comment type="function">
    <text evidence="1">Binds to DNA and alters its conformation. May be involved in regulation of gene expression, nucleoid organization and DNA protection.</text>
</comment>
<comment type="subunit">
    <text evidence="1">Homodimer.</text>
</comment>
<comment type="subcellular location">
    <subcellularLocation>
        <location evidence="1">Cytoplasm</location>
        <location evidence="1">Nucleoid</location>
    </subcellularLocation>
</comment>
<comment type="similarity">
    <text evidence="1">Belongs to the YbaB/EbfC family.</text>
</comment>
<feature type="chain" id="PRO_1000003769" description="Nucleoid-associated protein Mmar10_0436">
    <location>
        <begin position="1"/>
        <end position="107"/>
    </location>
</feature>
<organism>
    <name type="scientific">Maricaulis maris (strain MCS10)</name>
    <name type="common">Caulobacter maris</name>
    <dbReference type="NCBI Taxonomy" id="394221"/>
    <lineage>
        <taxon>Bacteria</taxon>
        <taxon>Pseudomonadati</taxon>
        <taxon>Pseudomonadota</taxon>
        <taxon>Alphaproteobacteria</taxon>
        <taxon>Maricaulales</taxon>
        <taxon>Maricaulaceae</taxon>
        <taxon>Maricaulis</taxon>
    </lineage>
</organism>
<proteinExistence type="inferred from homology"/>
<gene>
    <name type="ordered locus">Mmar10_0436</name>
</gene>
<accession>Q0ASK8</accession>
<dbReference type="EMBL" id="CP000449">
    <property type="protein sequence ID" value="ABI64729.1"/>
    <property type="molecule type" value="Genomic_DNA"/>
</dbReference>
<dbReference type="RefSeq" id="WP_011642376.1">
    <property type="nucleotide sequence ID" value="NC_008347.1"/>
</dbReference>
<dbReference type="SMR" id="Q0ASK8"/>
<dbReference type="STRING" id="394221.Mmar10_0436"/>
<dbReference type="KEGG" id="mmr:Mmar10_0436"/>
<dbReference type="eggNOG" id="COG0718">
    <property type="taxonomic scope" value="Bacteria"/>
</dbReference>
<dbReference type="HOGENOM" id="CLU_140930_0_1_5"/>
<dbReference type="OrthoDB" id="9803080at2"/>
<dbReference type="Proteomes" id="UP000001964">
    <property type="component" value="Chromosome"/>
</dbReference>
<dbReference type="GO" id="GO:0043590">
    <property type="term" value="C:bacterial nucleoid"/>
    <property type="evidence" value="ECO:0007669"/>
    <property type="project" value="UniProtKB-UniRule"/>
</dbReference>
<dbReference type="GO" id="GO:0005829">
    <property type="term" value="C:cytosol"/>
    <property type="evidence" value="ECO:0007669"/>
    <property type="project" value="TreeGrafter"/>
</dbReference>
<dbReference type="GO" id="GO:0003677">
    <property type="term" value="F:DNA binding"/>
    <property type="evidence" value="ECO:0007669"/>
    <property type="project" value="UniProtKB-UniRule"/>
</dbReference>
<dbReference type="Gene3D" id="3.30.1310.10">
    <property type="entry name" value="Nucleoid-associated protein YbaB-like domain"/>
    <property type="match status" value="1"/>
</dbReference>
<dbReference type="HAMAP" id="MF_00274">
    <property type="entry name" value="DNA_YbaB_EbfC"/>
    <property type="match status" value="1"/>
</dbReference>
<dbReference type="InterPro" id="IPR036894">
    <property type="entry name" value="YbaB-like_sf"/>
</dbReference>
<dbReference type="InterPro" id="IPR004401">
    <property type="entry name" value="YbaB/EbfC"/>
</dbReference>
<dbReference type="NCBIfam" id="TIGR00103">
    <property type="entry name" value="DNA_YbaB_EbfC"/>
    <property type="match status" value="1"/>
</dbReference>
<dbReference type="PANTHER" id="PTHR33449">
    <property type="entry name" value="NUCLEOID-ASSOCIATED PROTEIN YBAB"/>
    <property type="match status" value="1"/>
</dbReference>
<dbReference type="PANTHER" id="PTHR33449:SF1">
    <property type="entry name" value="NUCLEOID-ASSOCIATED PROTEIN YBAB"/>
    <property type="match status" value="1"/>
</dbReference>
<dbReference type="Pfam" id="PF02575">
    <property type="entry name" value="YbaB_DNA_bd"/>
    <property type="match status" value="1"/>
</dbReference>
<dbReference type="PIRSF" id="PIRSF004555">
    <property type="entry name" value="UCP004555"/>
    <property type="match status" value="1"/>
</dbReference>
<dbReference type="SUPFAM" id="SSF82607">
    <property type="entry name" value="YbaB-like"/>
    <property type="match status" value="1"/>
</dbReference>
<protein>
    <recommendedName>
        <fullName evidence="1">Nucleoid-associated protein Mmar10_0436</fullName>
    </recommendedName>
</protein>
<keyword id="KW-0963">Cytoplasm</keyword>
<keyword id="KW-0238">DNA-binding</keyword>
<keyword id="KW-1185">Reference proteome</keyword>
<evidence type="ECO:0000255" key="1">
    <source>
        <dbReference type="HAMAP-Rule" id="MF_00274"/>
    </source>
</evidence>
<sequence>MKDLMGLMKQAQAMQQKMTEAQARLAETEVTGEAGAGLVRVVLTAKGDMVSIHVDKSLMDPDEPEILEDLLKAAHADARRKGEEAQQDIMKDAAGGLQLPPGMQMPF</sequence>
<name>Y436_MARMM</name>
<reference key="1">
    <citation type="submission" date="2006-08" db="EMBL/GenBank/DDBJ databases">
        <title>Complete sequence of Maricaulis maris MCS10.</title>
        <authorList>
            <consortium name="US DOE Joint Genome Institute"/>
            <person name="Copeland A."/>
            <person name="Lucas S."/>
            <person name="Lapidus A."/>
            <person name="Barry K."/>
            <person name="Detter J.C."/>
            <person name="Glavina del Rio T."/>
            <person name="Hammon N."/>
            <person name="Israni S."/>
            <person name="Dalin E."/>
            <person name="Tice H."/>
            <person name="Pitluck S."/>
            <person name="Saunders E."/>
            <person name="Brettin T."/>
            <person name="Bruce D."/>
            <person name="Han C."/>
            <person name="Tapia R."/>
            <person name="Gilna P."/>
            <person name="Schmutz J."/>
            <person name="Larimer F."/>
            <person name="Land M."/>
            <person name="Hauser L."/>
            <person name="Kyrpides N."/>
            <person name="Mikhailova N."/>
            <person name="Viollier P."/>
            <person name="Stephens C."/>
            <person name="Richardson P."/>
        </authorList>
    </citation>
    <scope>NUCLEOTIDE SEQUENCE [LARGE SCALE GENOMIC DNA]</scope>
    <source>
        <strain>MCS10</strain>
    </source>
</reference>